<feature type="chain" id="PRO_0000280737" description="WD repeat-containing protein 26">
    <location>
        <begin position="1"/>
        <end position="576"/>
    </location>
</feature>
<feature type="domain" description="LisH" evidence="4">
    <location>
        <begin position="51"/>
        <end position="83"/>
    </location>
</feature>
<feature type="domain" description="CTLH" evidence="3">
    <location>
        <begin position="84"/>
        <end position="143"/>
    </location>
</feature>
<feature type="repeat" description="WD 1">
    <location>
        <begin position="265"/>
        <end position="304"/>
    </location>
</feature>
<feature type="repeat" description="WD 2">
    <location>
        <begin position="311"/>
        <end position="350"/>
    </location>
</feature>
<feature type="repeat" description="WD 3">
    <location>
        <begin position="356"/>
        <end position="396"/>
    </location>
</feature>
<feature type="repeat" description="WD 4">
    <location>
        <begin position="436"/>
        <end position="475"/>
    </location>
</feature>
<feature type="repeat" description="WD 5">
    <location>
        <begin position="478"/>
        <end position="520"/>
    </location>
</feature>
<feature type="repeat" description="WD 6">
    <location>
        <begin position="523"/>
        <end position="563"/>
    </location>
</feature>
<feature type="region of interest" description="Disordered" evidence="5">
    <location>
        <begin position="1"/>
        <end position="46"/>
    </location>
</feature>
<feature type="compositionally biased region" description="Polar residues" evidence="5">
    <location>
        <begin position="1"/>
        <end position="20"/>
    </location>
</feature>
<feature type="compositionally biased region" description="Low complexity" evidence="5">
    <location>
        <begin position="21"/>
        <end position="34"/>
    </location>
</feature>
<feature type="modified residue" description="Phosphoserine" evidence="6">
    <location>
        <position position="49"/>
    </location>
</feature>
<organism>
    <name type="scientific">Danio rerio</name>
    <name type="common">Zebrafish</name>
    <name type="synonym">Brachydanio rerio</name>
    <dbReference type="NCBI Taxonomy" id="7955"/>
    <lineage>
        <taxon>Eukaryota</taxon>
        <taxon>Metazoa</taxon>
        <taxon>Chordata</taxon>
        <taxon>Craniata</taxon>
        <taxon>Vertebrata</taxon>
        <taxon>Euteleostomi</taxon>
        <taxon>Actinopterygii</taxon>
        <taxon>Neopterygii</taxon>
        <taxon>Teleostei</taxon>
        <taxon>Ostariophysi</taxon>
        <taxon>Cypriniformes</taxon>
        <taxon>Danionidae</taxon>
        <taxon>Danioninae</taxon>
        <taxon>Danio</taxon>
    </lineage>
</organism>
<accession>Q5SP67</accession>
<name>WDR26_DANRE</name>
<protein>
    <recommendedName>
        <fullName>WD repeat-containing protein 26</fullName>
    </recommendedName>
</protein>
<gene>
    <name type="primary">wdr26</name>
    <name type="ORF">si:ch211-153j24.6</name>
</gene>
<evidence type="ECO:0000250" key="1">
    <source>
        <dbReference type="UniProtKB" id="F1LTR1"/>
    </source>
</evidence>
<evidence type="ECO:0000250" key="2">
    <source>
        <dbReference type="UniProtKB" id="Q9H7D7"/>
    </source>
</evidence>
<evidence type="ECO:0000255" key="3">
    <source>
        <dbReference type="PROSITE-ProRule" id="PRU00058"/>
    </source>
</evidence>
<evidence type="ECO:0000255" key="4">
    <source>
        <dbReference type="PROSITE-ProRule" id="PRU00126"/>
    </source>
</evidence>
<evidence type="ECO:0000256" key="5">
    <source>
        <dbReference type="SAM" id="MobiDB-lite"/>
    </source>
</evidence>
<evidence type="ECO:0000269" key="6">
    <source>
    </source>
</evidence>
<keyword id="KW-0963">Cytoplasm</keyword>
<keyword id="KW-0496">Mitochondrion</keyword>
<keyword id="KW-0539">Nucleus</keyword>
<keyword id="KW-0597">Phosphoprotein</keyword>
<keyword id="KW-1185">Reference proteome</keyword>
<keyword id="KW-0677">Repeat</keyword>
<keyword id="KW-0853">WD repeat</keyword>
<dbReference type="EMBL" id="AL929435">
    <property type="protein sequence ID" value="CAI11628.1"/>
    <property type="molecule type" value="Genomic_DNA"/>
</dbReference>
<dbReference type="EMBL" id="BX004824">
    <property type="protein sequence ID" value="CAI11628.1"/>
    <property type="status" value="JOINED"/>
    <property type="molecule type" value="Genomic_DNA"/>
</dbReference>
<dbReference type="EMBL" id="BX004824">
    <property type="protein sequence ID" value="CAI12019.1"/>
    <property type="molecule type" value="Genomic_DNA"/>
</dbReference>
<dbReference type="EMBL" id="AL929435">
    <property type="protein sequence ID" value="CAI12019.1"/>
    <property type="status" value="JOINED"/>
    <property type="molecule type" value="Genomic_DNA"/>
</dbReference>
<dbReference type="RefSeq" id="NP_001189371.1">
    <property type="nucleotide sequence ID" value="NM_001202442.1"/>
</dbReference>
<dbReference type="RefSeq" id="XP_009293240.1">
    <property type="nucleotide sequence ID" value="XM_009294965.2"/>
</dbReference>
<dbReference type="SMR" id="Q5SP67"/>
<dbReference type="FunCoup" id="Q5SP67">
    <property type="interactions" value="1542"/>
</dbReference>
<dbReference type="STRING" id="7955.ENSDARP00000036145"/>
<dbReference type="iPTMnet" id="Q5SP67"/>
<dbReference type="PaxDb" id="7955-ENSDARP00000036145"/>
<dbReference type="Ensembl" id="ENSDART00000029894">
    <property type="protein sequence ID" value="ENSDARP00000036145"/>
    <property type="gene ID" value="ENSDARG00000006812"/>
</dbReference>
<dbReference type="Ensembl" id="ENSDART00000167398">
    <property type="protein sequence ID" value="ENSDARP00000132796"/>
    <property type="gene ID" value="ENSDARG00000006812"/>
</dbReference>
<dbReference type="GeneID" id="564794"/>
<dbReference type="KEGG" id="dre:564794"/>
<dbReference type="AGR" id="ZFIN:ZDB-GENE-041014-277"/>
<dbReference type="CTD" id="564794"/>
<dbReference type="ZFIN" id="ZDB-GENE-041014-277">
    <property type="gene designation" value="wdr26b"/>
</dbReference>
<dbReference type="eggNOG" id="KOG0293">
    <property type="taxonomic scope" value="Eukaryota"/>
</dbReference>
<dbReference type="InParanoid" id="Q5SP67"/>
<dbReference type="OMA" id="YEDHCCS"/>
<dbReference type="OrthoDB" id="972532at2759"/>
<dbReference type="PhylomeDB" id="Q5SP67"/>
<dbReference type="TreeFam" id="TF314869"/>
<dbReference type="Reactome" id="R-DRE-9861718">
    <property type="pathway name" value="Regulation of pyruvate metabolism"/>
</dbReference>
<dbReference type="PRO" id="PR:Q5SP67"/>
<dbReference type="Proteomes" id="UP000000437">
    <property type="component" value="Chromosome 20"/>
</dbReference>
<dbReference type="Bgee" id="ENSDARG00000006812">
    <property type="expression patterns" value="Expressed in mature ovarian follicle and 26 other cell types or tissues"/>
</dbReference>
<dbReference type="GO" id="GO:0034657">
    <property type="term" value="C:GID complex"/>
    <property type="evidence" value="ECO:0000318"/>
    <property type="project" value="GO_Central"/>
</dbReference>
<dbReference type="GO" id="GO:0005739">
    <property type="term" value="C:mitochondrion"/>
    <property type="evidence" value="ECO:0007669"/>
    <property type="project" value="UniProtKB-SubCell"/>
</dbReference>
<dbReference type="GO" id="GO:0005634">
    <property type="term" value="C:nucleus"/>
    <property type="evidence" value="ECO:0007669"/>
    <property type="project" value="UniProtKB-SubCell"/>
</dbReference>
<dbReference type="GO" id="GO:0043161">
    <property type="term" value="P:proteasome-mediated ubiquitin-dependent protein catabolic process"/>
    <property type="evidence" value="ECO:0000318"/>
    <property type="project" value="GO_Central"/>
</dbReference>
<dbReference type="CDD" id="cd00200">
    <property type="entry name" value="WD40"/>
    <property type="match status" value="1"/>
</dbReference>
<dbReference type="FunFam" id="2.130.10.10:FF:000087">
    <property type="entry name" value="WD repeat-containing protein 26 homolog"/>
    <property type="match status" value="1"/>
</dbReference>
<dbReference type="Gene3D" id="2.130.10.10">
    <property type="entry name" value="YVTN repeat-like/Quinoprotein amine dehydrogenase"/>
    <property type="match status" value="2"/>
</dbReference>
<dbReference type="InterPro" id="IPR006595">
    <property type="entry name" value="CTLH_C"/>
</dbReference>
<dbReference type="InterPro" id="IPR020472">
    <property type="entry name" value="G-protein_beta_WD-40_rep"/>
</dbReference>
<dbReference type="InterPro" id="IPR006594">
    <property type="entry name" value="LisH"/>
</dbReference>
<dbReference type="InterPro" id="IPR054532">
    <property type="entry name" value="TPL_SMU1_LisH-like"/>
</dbReference>
<dbReference type="InterPro" id="IPR015943">
    <property type="entry name" value="WD40/YVTN_repeat-like_dom_sf"/>
</dbReference>
<dbReference type="InterPro" id="IPR036322">
    <property type="entry name" value="WD40_repeat_dom_sf"/>
</dbReference>
<dbReference type="InterPro" id="IPR001680">
    <property type="entry name" value="WD40_rpt"/>
</dbReference>
<dbReference type="InterPro" id="IPR051350">
    <property type="entry name" value="WD_repeat-ST_regulator"/>
</dbReference>
<dbReference type="PANTHER" id="PTHR22838">
    <property type="entry name" value="WD REPEAT PROTEIN 26-RELATED"/>
    <property type="match status" value="1"/>
</dbReference>
<dbReference type="PANTHER" id="PTHR22838:SF0">
    <property type="entry name" value="WD REPEAT-CONTAINING PROTEIN 26"/>
    <property type="match status" value="1"/>
</dbReference>
<dbReference type="Pfam" id="PF17814">
    <property type="entry name" value="LisH_TPL"/>
    <property type="match status" value="1"/>
</dbReference>
<dbReference type="Pfam" id="PF00400">
    <property type="entry name" value="WD40"/>
    <property type="match status" value="5"/>
</dbReference>
<dbReference type="PRINTS" id="PR00320">
    <property type="entry name" value="GPROTEINBRPT"/>
</dbReference>
<dbReference type="SMART" id="SM00668">
    <property type="entry name" value="CTLH"/>
    <property type="match status" value="1"/>
</dbReference>
<dbReference type="SMART" id="SM00320">
    <property type="entry name" value="WD40"/>
    <property type="match status" value="5"/>
</dbReference>
<dbReference type="SUPFAM" id="SSF50978">
    <property type="entry name" value="WD40 repeat-like"/>
    <property type="match status" value="1"/>
</dbReference>
<dbReference type="PROSITE" id="PS50897">
    <property type="entry name" value="CTLH"/>
    <property type="match status" value="1"/>
</dbReference>
<dbReference type="PROSITE" id="PS50896">
    <property type="entry name" value="LISH"/>
    <property type="match status" value="1"/>
</dbReference>
<dbReference type="PROSITE" id="PS50082">
    <property type="entry name" value="WD_REPEATS_2"/>
    <property type="match status" value="3"/>
</dbReference>
<dbReference type="PROSITE" id="PS50294">
    <property type="entry name" value="WD_REPEATS_REGION"/>
    <property type="match status" value="1"/>
</dbReference>
<sequence>MQSNGTGQEQNHPANTQNGDANGLQSNAGSASGASGTGSGSLKKKKRLSQAEEDVIRLIGQHLHGLGLNQTVDLLMQESGCRLEHSSATKFRNHVMEGEWDKAENDLNELKALMHSPNAIVRMKFLLLQQKYLEYLEDGKVLEALQVLRGELTPLKYNTDRIHVLSGYLMCSHAEDLKAKAEWEGKGAGSRCRLLDKLQTYLPPSVMLPPRRLQTLLRQAVELQRDRCLYHNTKLDSSLDSVSLLLDHVCSRKQFPCYTQQILTEHCNEVWFCKFSNDGTKLATGSKDTTVIIWQVEPDTHQLKLLRTLEGHAYGVSYLAWSPDDVYLIACGPDDCSELWLWNVQTGELRTKMSQSHEDSLTSVAWNPDGKRFVTGGQRGQFYQCDLDGNLLESWEGVRVQCLWCMGDGRTVLASDTHQRIRGYSFEDLTDRNIVQEDHPIMSFTVSKNGRLALLNVATQGVHLWDLQDRVLVRKYQGVTQGFYTIHSCFGGHNEDFIASGSEDHKVYIWHKRSELPIVELTGHTRTVNCVSWNPCIPSLMASASDDGTVRIWGPAPFLDAQELDGLTESCSSMDS</sequence>
<comment type="function">
    <text evidence="1 2">G-beta-like protein involved in cell signal transduction. Acts as a negative regulator in MAPK signaling pathway. Functions as a scaffolding protein to promote G beta:gamma-mediated PLCB2 plasma membrane translocation and subsequent activation in leukocytes. Core component of the CTLH E3 ubiquitin-protein ligase complex that mediates ubiquitination and subsequent proteasomal degradation of target proteins (By similarity). Acts as a negative regulator of the canonical Wnt signaling pathway through preventing ubiquitination of beta-catenin CTNNB1 by the beta-catenin destruction complex, thus negatively regulating CTNNB1 degradation. Serves as a scaffold to coordinate PI3K/AKT pathway-driven cell growth and migration. Protects cells from oxidative stress-induced apoptosis via the down-regulation of AP-1 transcriptional activity as well as by inhibiting cytochrome c release from mitochondria (By similarity). Also protects cells by promoting hypoxia-mediated autophagy and mitophagy (By similarity).</text>
</comment>
<comment type="subunit">
    <text evidence="2">Forms homooligomers. Identified in the CTLH complex that contains at least MAEA, RMND5A (or alternatively its paralog RMND5B), GID8, WDR26, and RANBP9 and/or RANBP10. Interacts with DDB1-CUL4A/B E3 ligase complexes.</text>
</comment>
<comment type="subcellular location">
    <subcellularLocation>
        <location evidence="2">Cytoplasm</location>
    </subcellularLocation>
    <subcellularLocation>
        <location evidence="2">Nucleus</location>
    </subcellularLocation>
    <subcellularLocation>
        <location evidence="1">Mitochondrion</location>
    </subcellularLocation>
</comment>
<reference key="1">
    <citation type="journal article" date="2013" name="Nature">
        <title>The zebrafish reference genome sequence and its relationship to the human genome.</title>
        <authorList>
            <person name="Howe K."/>
            <person name="Clark M.D."/>
            <person name="Torroja C.F."/>
            <person name="Torrance J."/>
            <person name="Berthelot C."/>
            <person name="Muffato M."/>
            <person name="Collins J.E."/>
            <person name="Humphray S."/>
            <person name="McLaren K."/>
            <person name="Matthews L."/>
            <person name="McLaren S."/>
            <person name="Sealy I."/>
            <person name="Caccamo M."/>
            <person name="Churcher C."/>
            <person name="Scott C."/>
            <person name="Barrett J.C."/>
            <person name="Koch R."/>
            <person name="Rauch G.J."/>
            <person name="White S."/>
            <person name="Chow W."/>
            <person name="Kilian B."/>
            <person name="Quintais L.T."/>
            <person name="Guerra-Assuncao J.A."/>
            <person name="Zhou Y."/>
            <person name="Gu Y."/>
            <person name="Yen J."/>
            <person name="Vogel J.H."/>
            <person name="Eyre T."/>
            <person name="Redmond S."/>
            <person name="Banerjee R."/>
            <person name="Chi J."/>
            <person name="Fu B."/>
            <person name="Langley E."/>
            <person name="Maguire S.F."/>
            <person name="Laird G.K."/>
            <person name="Lloyd D."/>
            <person name="Kenyon E."/>
            <person name="Donaldson S."/>
            <person name="Sehra H."/>
            <person name="Almeida-King J."/>
            <person name="Loveland J."/>
            <person name="Trevanion S."/>
            <person name="Jones M."/>
            <person name="Quail M."/>
            <person name="Willey D."/>
            <person name="Hunt A."/>
            <person name="Burton J."/>
            <person name="Sims S."/>
            <person name="McLay K."/>
            <person name="Plumb B."/>
            <person name="Davis J."/>
            <person name="Clee C."/>
            <person name="Oliver K."/>
            <person name="Clark R."/>
            <person name="Riddle C."/>
            <person name="Elliot D."/>
            <person name="Threadgold G."/>
            <person name="Harden G."/>
            <person name="Ware D."/>
            <person name="Begum S."/>
            <person name="Mortimore B."/>
            <person name="Kerry G."/>
            <person name="Heath P."/>
            <person name="Phillimore B."/>
            <person name="Tracey A."/>
            <person name="Corby N."/>
            <person name="Dunn M."/>
            <person name="Johnson C."/>
            <person name="Wood J."/>
            <person name="Clark S."/>
            <person name="Pelan S."/>
            <person name="Griffiths G."/>
            <person name="Smith M."/>
            <person name="Glithero R."/>
            <person name="Howden P."/>
            <person name="Barker N."/>
            <person name="Lloyd C."/>
            <person name="Stevens C."/>
            <person name="Harley J."/>
            <person name="Holt K."/>
            <person name="Panagiotidis G."/>
            <person name="Lovell J."/>
            <person name="Beasley H."/>
            <person name="Henderson C."/>
            <person name="Gordon D."/>
            <person name="Auger K."/>
            <person name="Wright D."/>
            <person name="Collins J."/>
            <person name="Raisen C."/>
            <person name="Dyer L."/>
            <person name="Leung K."/>
            <person name="Robertson L."/>
            <person name="Ambridge K."/>
            <person name="Leongamornlert D."/>
            <person name="McGuire S."/>
            <person name="Gilderthorp R."/>
            <person name="Griffiths C."/>
            <person name="Manthravadi D."/>
            <person name="Nichol S."/>
            <person name="Barker G."/>
            <person name="Whitehead S."/>
            <person name="Kay M."/>
            <person name="Brown J."/>
            <person name="Murnane C."/>
            <person name="Gray E."/>
            <person name="Humphries M."/>
            <person name="Sycamore N."/>
            <person name="Barker D."/>
            <person name="Saunders D."/>
            <person name="Wallis J."/>
            <person name="Babbage A."/>
            <person name="Hammond S."/>
            <person name="Mashreghi-Mohammadi M."/>
            <person name="Barr L."/>
            <person name="Martin S."/>
            <person name="Wray P."/>
            <person name="Ellington A."/>
            <person name="Matthews N."/>
            <person name="Ellwood M."/>
            <person name="Woodmansey R."/>
            <person name="Clark G."/>
            <person name="Cooper J."/>
            <person name="Tromans A."/>
            <person name="Grafham D."/>
            <person name="Skuce C."/>
            <person name="Pandian R."/>
            <person name="Andrews R."/>
            <person name="Harrison E."/>
            <person name="Kimberley A."/>
            <person name="Garnett J."/>
            <person name="Fosker N."/>
            <person name="Hall R."/>
            <person name="Garner P."/>
            <person name="Kelly D."/>
            <person name="Bird C."/>
            <person name="Palmer S."/>
            <person name="Gehring I."/>
            <person name="Berger A."/>
            <person name="Dooley C.M."/>
            <person name="Ersan-Urun Z."/>
            <person name="Eser C."/>
            <person name="Geiger H."/>
            <person name="Geisler M."/>
            <person name="Karotki L."/>
            <person name="Kirn A."/>
            <person name="Konantz J."/>
            <person name="Konantz M."/>
            <person name="Oberlander M."/>
            <person name="Rudolph-Geiger S."/>
            <person name="Teucke M."/>
            <person name="Lanz C."/>
            <person name="Raddatz G."/>
            <person name="Osoegawa K."/>
            <person name="Zhu B."/>
            <person name="Rapp A."/>
            <person name="Widaa S."/>
            <person name="Langford C."/>
            <person name="Yang F."/>
            <person name="Schuster S.C."/>
            <person name="Carter N.P."/>
            <person name="Harrow J."/>
            <person name="Ning Z."/>
            <person name="Herrero J."/>
            <person name="Searle S.M."/>
            <person name="Enright A."/>
            <person name="Geisler R."/>
            <person name="Plasterk R.H."/>
            <person name="Lee C."/>
            <person name="Westerfield M."/>
            <person name="de Jong P.J."/>
            <person name="Zon L.I."/>
            <person name="Postlethwait J.H."/>
            <person name="Nusslein-Volhard C."/>
            <person name="Hubbard T.J."/>
            <person name="Roest Crollius H."/>
            <person name="Rogers J."/>
            <person name="Stemple D.L."/>
        </authorList>
    </citation>
    <scope>NUCLEOTIDE SEQUENCE [LARGE SCALE GENOMIC DNA]</scope>
    <source>
        <strain>Tuebingen</strain>
    </source>
</reference>
<reference key="2">
    <citation type="journal article" date="2008" name="J. Proteome Res.">
        <title>Online automated in vivo zebrafish phosphoproteomics: from large-scale analysis down to a single embryo.</title>
        <authorList>
            <person name="Lemeer S."/>
            <person name="Pinkse M.W.H."/>
            <person name="Mohammed S."/>
            <person name="van Breukelen B."/>
            <person name="den Hertog J."/>
            <person name="Slijper M."/>
            <person name="Heck A.J.R."/>
        </authorList>
    </citation>
    <scope>PHOSPHORYLATION [LARGE SCALE ANALYSIS] AT SER-49</scope>
    <scope>IDENTIFICATION BY MASS SPECTROMETRY</scope>
    <source>
        <tissue>Embryo</tissue>
    </source>
</reference>
<proteinExistence type="evidence at protein level"/>